<comment type="function">
    <text evidence="1">Associates with the EF-Tu.GDP complex and induces the exchange of GDP to GTP. It remains bound to the aminoacyl-tRNA.EF-Tu.GTP complex up to the GTP hydrolysis stage on the ribosome.</text>
</comment>
<comment type="subcellular location">
    <subcellularLocation>
        <location evidence="1">Cytoplasm</location>
    </subcellularLocation>
</comment>
<comment type="similarity">
    <text evidence="1">Belongs to the EF-Ts family.</text>
</comment>
<evidence type="ECO:0000255" key="1">
    <source>
        <dbReference type="HAMAP-Rule" id="MF_00050"/>
    </source>
</evidence>
<accession>Q0A7I1</accession>
<feature type="chain" id="PRO_1000006049" description="Elongation factor Ts">
    <location>
        <begin position="1"/>
        <end position="292"/>
    </location>
</feature>
<feature type="region of interest" description="Involved in Mg(2+) ion dislocation from EF-Tu" evidence="1">
    <location>
        <begin position="81"/>
        <end position="84"/>
    </location>
</feature>
<name>EFTS_ALKEH</name>
<sequence length="292" mass="31697">MAISASLVKQLRERTGSGMMECKKALVETDGDLDAAVELMRKKGLAKADKKSGRIAAEGIIAAKRSEDGHSGVLVEINSETDFVAKSDDFLAFADGVARLALEEKPEDLEALMACELNGQDLATATKELVAKIGENIQVRRFVRYGSSGNTVAQYLHGSRIGVMVELEGGDEQLARDVAMHVAASKPECVSEDDMPAEVIEKEKAILVEQARESGKPEEIIEKMVQGRLKKFINEQTLVGQPFVKDPDQTVGELLKGAGAKVARFVRYEVGEGKEKKEENFAEEVMAQARGS</sequence>
<gene>
    <name evidence="1" type="primary">tsf</name>
    <name type="ordered locus">Mlg_1862</name>
</gene>
<dbReference type="EMBL" id="CP000453">
    <property type="protein sequence ID" value="ABI57206.1"/>
    <property type="molecule type" value="Genomic_DNA"/>
</dbReference>
<dbReference type="RefSeq" id="WP_011629600.1">
    <property type="nucleotide sequence ID" value="NC_008340.1"/>
</dbReference>
<dbReference type="SMR" id="Q0A7I1"/>
<dbReference type="KEGG" id="aeh:Mlg_1862"/>
<dbReference type="eggNOG" id="COG0264">
    <property type="taxonomic scope" value="Bacteria"/>
</dbReference>
<dbReference type="HOGENOM" id="CLU_047155_0_2_6"/>
<dbReference type="OrthoDB" id="9808348at2"/>
<dbReference type="Proteomes" id="UP000001962">
    <property type="component" value="Chromosome"/>
</dbReference>
<dbReference type="GO" id="GO:0005737">
    <property type="term" value="C:cytoplasm"/>
    <property type="evidence" value="ECO:0007669"/>
    <property type="project" value="UniProtKB-SubCell"/>
</dbReference>
<dbReference type="GO" id="GO:0003746">
    <property type="term" value="F:translation elongation factor activity"/>
    <property type="evidence" value="ECO:0007669"/>
    <property type="project" value="UniProtKB-UniRule"/>
</dbReference>
<dbReference type="CDD" id="cd14275">
    <property type="entry name" value="UBA_EF-Ts"/>
    <property type="match status" value="1"/>
</dbReference>
<dbReference type="FunFam" id="1.10.286.20:FF:000001">
    <property type="entry name" value="Elongation factor Ts"/>
    <property type="match status" value="1"/>
</dbReference>
<dbReference type="FunFam" id="1.10.8.10:FF:000001">
    <property type="entry name" value="Elongation factor Ts"/>
    <property type="match status" value="1"/>
</dbReference>
<dbReference type="Gene3D" id="1.10.286.20">
    <property type="match status" value="1"/>
</dbReference>
<dbReference type="Gene3D" id="1.10.8.10">
    <property type="entry name" value="DNA helicase RuvA subunit, C-terminal domain"/>
    <property type="match status" value="1"/>
</dbReference>
<dbReference type="Gene3D" id="3.30.479.20">
    <property type="entry name" value="Elongation factor Ts, dimerisation domain"/>
    <property type="match status" value="2"/>
</dbReference>
<dbReference type="HAMAP" id="MF_00050">
    <property type="entry name" value="EF_Ts"/>
    <property type="match status" value="1"/>
</dbReference>
<dbReference type="InterPro" id="IPR036402">
    <property type="entry name" value="EF-Ts_dimer_sf"/>
</dbReference>
<dbReference type="InterPro" id="IPR001816">
    <property type="entry name" value="Transl_elong_EFTs/EF1B"/>
</dbReference>
<dbReference type="InterPro" id="IPR014039">
    <property type="entry name" value="Transl_elong_EFTs/EF1B_dimer"/>
</dbReference>
<dbReference type="InterPro" id="IPR018101">
    <property type="entry name" value="Transl_elong_Ts_CS"/>
</dbReference>
<dbReference type="InterPro" id="IPR009060">
    <property type="entry name" value="UBA-like_sf"/>
</dbReference>
<dbReference type="NCBIfam" id="TIGR00116">
    <property type="entry name" value="tsf"/>
    <property type="match status" value="1"/>
</dbReference>
<dbReference type="PANTHER" id="PTHR11741">
    <property type="entry name" value="ELONGATION FACTOR TS"/>
    <property type="match status" value="1"/>
</dbReference>
<dbReference type="PANTHER" id="PTHR11741:SF0">
    <property type="entry name" value="ELONGATION FACTOR TS, MITOCHONDRIAL"/>
    <property type="match status" value="1"/>
</dbReference>
<dbReference type="Pfam" id="PF00889">
    <property type="entry name" value="EF_TS"/>
    <property type="match status" value="1"/>
</dbReference>
<dbReference type="SUPFAM" id="SSF54713">
    <property type="entry name" value="Elongation factor Ts (EF-Ts), dimerisation domain"/>
    <property type="match status" value="2"/>
</dbReference>
<dbReference type="SUPFAM" id="SSF46934">
    <property type="entry name" value="UBA-like"/>
    <property type="match status" value="1"/>
</dbReference>
<dbReference type="PROSITE" id="PS01126">
    <property type="entry name" value="EF_TS_1"/>
    <property type="match status" value="1"/>
</dbReference>
<dbReference type="PROSITE" id="PS01127">
    <property type="entry name" value="EF_TS_2"/>
    <property type="match status" value="1"/>
</dbReference>
<proteinExistence type="inferred from homology"/>
<reference key="1">
    <citation type="submission" date="2006-08" db="EMBL/GenBank/DDBJ databases">
        <title>Complete sequence of Alkalilimnicola ehrilichei MLHE-1.</title>
        <authorList>
            <person name="Copeland A."/>
            <person name="Lucas S."/>
            <person name="Lapidus A."/>
            <person name="Barry K."/>
            <person name="Detter J.C."/>
            <person name="Glavina del Rio T."/>
            <person name="Hammon N."/>
            <person name="Israni S."/>
            <person name="Dalin E."/>
            <person name="Tice H."/>
            <person name="Pitluck S."/>
            <person name="Sims D."/>
            <person name="Brettin T."/>
            <person name="Bruce D."/>
            <person name="Han C."/>
            <person name="Tapia R."/>
            <person name="Gilna P."/>
            <person name="Schmutz J."/>
            <person name="Larimer F."/>
            <person name="Land M."/>
            <person name="Hauser L."/>
            <person name="Kyrpides N."/>
            <person name="Mikhailova N."/>
            <person name="Oremland R.S."/>
            <person name="Hoeft S.E."/>
            <person name="Switzer-Blum J."/>
            <person name="Kulp T."/>
            <person name="King G."/>
            <person name="Tabita R."/>
            <person name="Witte B."/>
            <person name="Santini J.M."/>
            <person name="Basu P."/>
            <person name="Hollibaugh J.T."/>
            <person name="Xie G."/>
            <person name="Stolz J.F."/>
            <person name="Richardson P."/>
        </authorList>
    </citation>
    <scope>NUCLEOTIDE SEQUENCE [LARGE SCALE GENOMIC DNA]</scope>
    <source>
        <strain>ATCC BAA-1101 / DSM 17681 / MLHE-1</strain>
    </source>
</reference>
<organism>
    <name type="scientific">Alkalilimnicola ehrlichii (strain ATCC BAA-1101 / DSM 17681 / MLHE-1)</name>
    <dbReference type="NCBI Taxonomy" id="187272"/>
    <lineage>
        <taxon>Bacteria</taxon>
        <taxon>Pseudomonadati</taxon>
        <taxon>Pseudomonadota</taxon>
        <taxon>Gammaproteobacteria</taxon>
        <taxon>Chromatiales</taxon>
        <taxon>Ectothiorhodospiraceae</taxon>
        <taxon>Alkalilimnicola</taxon>
    </lineage>
</organism>
<protein>
    <recommendedName>
        <fullName evidence="1">Elongation factor Ts</fullName>
        <shortName evidence="1">EF-Ts</shortName>
    </recommendedName>
</protein>
<keyword id="KW-0963">Cytoplasm</keyword>
<keyword id="KW-0251">Elongation factor</keyword>
<keyword id="KW-0648">Protein biosynthesis</keyword>
<keyword id="KW-1185">Reference proteome</keyword>